<name>RNC_RICAH</name>
<accession>A8GM79</accession>
<proteinExistence type="inferred from homology"/>
<feature type="chain" id="PRO_1000075800" description="Ribonuclease 3">
    <location>
        <begin position="1"/>
        <end position="227"/>
    </location>
</feature>
<feature type="domain" description="RNase III" evidence="1">
    <location>
        <begin position="4"/>
        <end position="133"/>
    </location>
</feature>
<feature type="domain" description="DRBM" evidence="1">
    <location>
        <begin position="158"/>
        <end position="226"/>
    </location>
</feature>
<feature type="active site" evidence="1">
    <location>
        <position position="50"/>
    </location>
</feature>
<feature type="active site" evidence="1">
    <location>
        <position position="122"/>
    </location>
</feature>
<feature type="binding site" evidence="1">
    <location>
        <position position="46"/>
    </location>
    <ligand>
        <name>Mg(2+)</name>
        <dbReference type="ChEBI" id="CHEBI:18420"/>
    </ligand>
</feature>
<feature type="binding site" evidence="1">
    <location>
        <position position="119"/>
    </location>
    <ligand>
        <name>Mg(2+)</name>
        <dbReference type="ChEBI" id="CHEBI:18420"/>
    </ligand>
</feature>
<feature type="binding site" evidence="1">
    <location>
        <position position="122"/>
    </location>
    <ligand>
        <name>Mg(2+)</name>
        <dbReference type="ChEBI" id="CHEBI:18420"/>
    </ligand>
</feature>
<protein>
    <recommendedName>
        <fullName evidence="1">Ribonuclease 3</fullName>
        <ecNumber evidence="1">3.1.26.3</ecNumber>
    </recommendedName>
    <alternativeName>
        <fullName evidence="1">Ribonuclease III</fullName>
        <shortName evidence="1">RNase III</shortName>
    </alternativeName>
</protein>
<reference key="1">
    <citation type="submission" date="2007-09" db="EMBL/GenBank/DDBJ databases">
        <title>Complete genome sequence of Rickettsia akari.</title>
        <authorList>
            <person name="Madan A."/>
            <person name="Fahey J."/>
            <person name="Helton E."/>
            <person name="Ketteman M."/>
            <person name="Madan A."/>
            <person name="Rodrigues S."/>
            <person name="Sanchez A."/>
            <person name="Whiting M."/>
            <person name="Dasch G."/>
            <person name="Eremeeva M."/>
        </authorList>
    </citation>
    <scope>NUCLEOTIDE SEQUENCE [LARGE SCALE GENOMIC DNA]</scope>
    <source>
        <strain>Hartford</strain>
    </source>
</reference>
<evidence type="ECO:0000255" key="1">
    <source>
        <dbReference type="HAMAP-Rule" id="MF_00104"/>
    </source>
</evidence>
<gene>
    <name evidence="1" type="primary">rnc</name>
    <name type="ordered locus">A1C_00870</name>
</gene>
<dbReference type="EC" id="3.1.26.3" evidence="1"/>
<dbReference type="EMBL" id="CP000847">
    <property type="protein sequence ID" value="ABV74504.1"/>
    <property type="molecule type" value="Genomic_DNA"/>
</dbReference>
<dbReference type="RefSeq" id="WP_012013374.1">
    <property type="nucleotide sequence ID" value="NC_009881.1"/>
</dbReference>
<dbReference type="SMR" id="A8GM79"/>
<dbReference type="STRING" id="293614.A1C_00870"/>
<dbReference type="KEGG" id="rak:A1C_00870"/>
<dbReference type="eggNOG" id="COG0571">
    <property type="taxonomic scope" value="Bacteria"/>
</dbReference>
<dbReference type="HOGENOM" id="CLU_000907_1_1_5"/>
<dbReference type="Proteomes" id="UP000006830">
    <property type="component" value="Chromosome"/>
</dbReference>
<dbReference type="GO" id="GO:0005737">
    <property type="term" value="C:cytoplasm"/>
    <property type="evidence" value="ECO:0007669"/>
    <property type="project" value="UniProtKB-SubCell"/>
</dbReference>
<dbReference type="GO" id="GO:0003725">
    <property type="term" value="F:double-stranded RNA binding"/>
    <property type="evidence" value="ECO:0007669"/>
    <property type="project" value="TreeGrafter"/>
</dbReference>
<dbReference type="GO" id="GO:0046872">
    <property type="term" value="F:metal ion binding"/>
    <property type="evidence" value="ECO:0007669"/>
    <property type="project" value="UniProtKB-KW"/>
</dbReference>
<dbReference type="GO" id="GO:0004525">
    <property type="term" value="F:ribonuclease III activity"/>
    <property type="evidence" value="ECO:0007669"/>
    <property type="project" value="UniProtKB-UniRule"/>
</dbReference>
<dbReference type="GO" id="GO:0019843">
    <property type="term" value="F:rRNA binding"/>
    <property type="evidence" value="ECO:0007669"/>
    <property type="project" value="UniProtKB-KW"/>
</dbReference>
<dbReference type="GO" id="GO:0006397">
    <property type="term" value="P:mRNA processing"/>
    <property type="evidence" value="ECO:0007669"/>
    <property type="project" value="UniProtKB-UniRule"/>
</dbReference>
<dbReference type="GO" id="GO:0010468">
    <property type="term" value="P:regulation of gene expression"/>
    <property type="evidence" value="ECO:0007669"/>
    <property type="project" value="TreeGrafter"/>
</dbReference>
<dbReference type="GO" id="GO:0006364">
    <property type="term" value="P:rRNA processing"/>
    <property type="evidence" value="ECO:0007669"/>
    <property type="project" value="UniProtKB-UniRule"/>
</dbReference>
<dbReference type="GO" id="GO:0008033">
    <property type="term" value="P:tRNA processing"/>
    <property type="evidence" value="ECO:0007669"/>
    <property type="project" value="UniProtKB-KW"/>
</dbReference>
<dbReference type="CDD" id="cd10845">
    <property type="entry name" value="DSRM_RNAse_III_family"/>
    <property type="match status" value="1"/>
</dbReference>
<dbReference type="CDD" id="cd00593">
    <property type="entry name" value="RIBOc"/>
    <property type="match status" value="1"/>
</dbReference>
<dbReference type="FunFam" id="1.10.1520.10:FF:000001">
    <property type="entry name" value="Ribonuclease 3"/>
    <property type="match status" value="1"/>
</dbReference>
<dbReference type="Gene3D" id="3.30.160.20">
    <property type="match status" value="1"/>
</dbReference>
<dbReference type="Gene3D" id="1.10.1520.10">
    <property type="entry name" value="Ribonuclease III domain"/>
    <property type="match status" value="1"/>
</dbReference>
<dbReference type="HAMAP" id="MF_00104">
    <property type="entry name" value="RNase_III"/>
    <property type="match status" value="1"/>
</dbReference>
<dbReference type="InterPro" id="IPR014720">
    <property type="entry name" value="dsRBD_dom"/>
</dbReference>
<dbReference type="InterPro" id="IPR011907">
    <property type="entry name" value="RNase_III"/>
</dbReference>
<dbReference type="InterPro" id="IPR000999">
    <property type="entry name" value="RNase_III_dom"/>
</dbReference>
<dbReference type="InterPro" id="IPR036389">
    <property type="entry name" value="RNase_III_sf"/>
</dbReference>
<dbReference type="NCBIfam" id="TIGR02191">
    <property type="entry name" value="RNaseIII"/>
    <property type="match status" value="1"/>
</dbReference>
<dbReference type="PANTHER" id="PTHR11207:SF0">
    <property type="entry name" value="RIBONUCLEASE 3"/>
    <property type="match status" value="1"/>
</dbReference>
<dbReference type="PANTHER" id="PTHR11207">
    <property type="entry name" value="RIBONUCLEASE III"/>
    <property type="match status" value="1"/>
</dbReference>
<dbReference type="Pfam" id="PF00035">
    <property type="entry name" value="dsrm"/>
    <property type="match status" value="1"/>
</dbReference>
<dbReference type="Pfam" id="PF14622">
    <property type="entry name" value="Ribonucleas_3_3"/>
    <property type="match status" value="1"/>
</dbReference>
<dbReference type="SMART" id="SM00358">
    <property type="entry name" value="DSRM"/>
    <property type="match status" value="1"/>
</dbReference>
<dbReference type="SMART" id="SM00535">
    <property type="entry name" value="RIBOc"/>
    <property type="match status" value="1"/>
</dbReference>
<dbReference type="SUPFAM" id="SSF54768">
    <property type="entry name" value="dsRNA-binding domain-like"/>
    <property type="match status" value="1"/>
</dbReference>
<dbReference type="SUPFAM" id="SSF69065">
    <property type="entry name" value="RNase III domain-like"/>
    <property type="match status" value="1"/>
</dbReference>
<dbReference type="PROSITE" id="PS50137">
    <property type="entry name" value="DS_RBD"/>
    <property type="match status" value="1"/>
</dbReference>
<dbReference type="PROSITE" id="PS00517">
    <property type="entry name" value="RNASE_3_1"/>
    <property type="match status" value="1"/>
</dbReference>
<dbReference type="PROSITE" id="PS50142">
    <property type="entry name" value="RNASE_3_2"/>
    <property type="match status" value="1"/>
</dbReference>
<sequence>MQSFETLEKLLGYSFKNQELLIEALSHPSLRQHHEYKYDKDYERLEFLGDAVLNLVVTEILFRNFASYNEGNLAKIRSYLVCKETICVVGTKLTLKDYIIMTYGEEVAGGRDNPNNIENAMEALIAAIYLDSNIETTRNIIGKLWEEFIKIQNLTDYDPKTALQEWAQASSHHLPIYRLIKREGAAHSSTFTVLVKVKDYEQTGTGHSIKEAEKNAARDLLHRLQDV</sequence>
<comment type="function">
    <text evidence="1">Digests double-stranded RNA. Involved in the processing of primary rRNA transcript to yield the immediate precursors to the large and small rRNAs (23S and 16S). Processes some mRNAs, and tRNAs when they are encoded in the rRNA operon. Processes pre-crRNA and tracrRNA of type II CRISPR loci if present in the organism.</text>
</comment>
<comment type="catalytic activity">
    <reaction evidence="1">
        <text>Endonucleolytic cleavage to 5'-phosphomonoester.</text>
        <dbReference type="EC" id="3.1.26.3"/>
    </reaction>
</comment>
<comment type="cofactor">
    <cofactor evidence="1">
        <name>Mg(2+)</name>
        <dbReference type="ChEBI" id="CHEBI:18420"/>
    </cofactor>
</comment>
<comment type="subunit">
    <text evidence="1">Homodimer.</text>
</comment>
<comment type="subcellular location">
    <subcellularLocation>
        <location evidence="1">Cytoplasm</location>
    </subcellularLocation>
</comment>
<comment type="similarity">
    <text evidence="1">Belongs to the ribonuclease III family.</text>
</comment>
<organism>
    <name type="scientific">Rickettsia akari (strain Hartford)</name>
    <dbReference type="NCBI Taxonomy" id="293614"/>
    <lineage>
        <taxon>Bacteria</taxon>
        <taxon>Pseudomonadati</taxon>
        <taxon>Pseudomonadota</taxon>
        <taxon>Alphaproteobacteria</taxon>
        <taxon>Rickettsiales</taxon>
        <taxon>Rickettsiaceae</taxon>
        <taxon>Rickettsieae</taxon>
        <taxon>Rickettsia</taxon>
        <taxon>spotted fever group</taxon>
    </lineage>
</organism>
<keyword id="KW-0963">Cytoplasm</keyword>
<keyword id="KW-0255">Endonuclease</keyword>
<keyword id="KW-0378">Hydrolase</keyword>
<keyword id="KW-0460">Magnesium</keyword>
<keyword id="KW-0479">Metal-binding</keyword>
<keyword id="KW-0507">mRNA processing</keyword>
<keyword id="KW-0540">Nuclease</keyword>
<keyword id="KW-0694">RNA-binding</keyword>
<keyword id="KW-0698">rRNA processing</keyword>
<keyword id="KW-0699">rRNA-binding</keyword>
<keyword id="KW-0819">tRNA processing</keyword>